<reference key="1">
    <citation type="submission" date="2007-09" db="EMBL/GenBank/DDBJ databases">
        <title>Complete genome sequence of Rickettsia akari.</title>
        <authorList>
            <person name="Madan A."/>
            <person name="Fahey J."/>
            <person name="Helton E."/>
            <person name="Ketteman M."/>
            <person name="Madan A."/>
            <person name="Rodrigues S."/>
            <person name="Sanchez A."/>
            <person name="Whiting M."/>
            <person name="Dasch G."/>
            <person name="Eremeeva M."/>
        </authorList>
    </citation>
    <scope>NUCLEOTIDE SEQUENCE [LARGE SCALE GENOMIC DNA]</scope>
    <source>
        <strain>Hartford</strain>
    </source>
</reference>
<protein>
    <recommendedName>
        <fullName evidence="1">Serine--tRNA ligase</fullName>
        <ecNumber evidence="1">6.1.1.11</ecNumber>
    </recommendedName>
    <alternativeName>
        <fullName evidence="1">Seryl-tRNA synthetase</fullName>
        <shortName evidence="1">SerRS</shortName>
    </alternativeName>
    <alternativeName>
        <fullName evidence="1">Seryl-tRNA(Ser/Sec) synthetase</fullName>
    </alternativeName>
</protein>
<name>SYS_RICAH</name>
<dbReference type="EC" id="6.1.1.11" evidence="1"/>
<dbReference type="EMBL" id="CP000847">
    <property type="protein sequence ID" value="ABV75448.1"/>
    <property type="molecule type" value="Genomic_DNA"/>
</dbReference>
<dbReference type="RefSeq" id="WP_012150077.1">
    <property type="nucleotide sequence ID" value="NC_009881.1"/>
</dbReference>
<dbReference type="SMR" id="A8GPX3"/>
<dbReference type="STRING" id="293614.A1C_06075"/>
<dbReference type="KEGG" id="rak:A1C_06075"/>
<dbReference type="eggNOG" id="COG0172">
    <property type="taxonomic scope" value="Bacteria"/>
</dbReference>
<dbReference type="HOGENOM" id="CLU_023797_1_1_5"/>
<dbReference type="UniPathway" id="UPA00906">
    <property type="reaction ID" value="UER00895"/>
</dbReference>
<dbReference type="Proteomes" id="UP000006830">
    <property type="component" value="Chromosome"/>
</dbReference>
<dbReference type="GO" id="GO:0005737">
    <property type="term" value="C:cytoplasm"/>
    <property type="evidence" value="ECO:0007669"/>
    <property type="project" value="UniProtKB-SubCell"/>
</dbReference>
<dbReference type="GO" id="GO:0005524">
    <property type="term" value="F:ATP binding"/>
    <property type="evidence" value="ECO:0007669"/>
    <property type="project" value="UniProtKB-UniRule"/>
</dbReference>
<dbReference type="GO" id="GO:0004828">
    <property type="term" value="F:serine-tRNA ligase activity"/>
    <property type="evidence" value="ECO:0007669"/>
    <property type="project" value="UniProtKB-UniRule"/>
</dbReference>
<dbReference type="GO" id="GO:0016260">
    <property type="term" value="P:selenocysteine biosynthetic process"/>
    <property type="evidence" value="ECO:0007669"/>
    <property type="project" value="UniProtKB-UniRule"/>
</dbReference>
<dbReference type="GO" id="GO:0006434">
    <property type="term" value="P:seryl-tRNA aminoacylation"/>
    <property type="evidence" value="ECO:0007669"/>
    <property type="project" value="UniProtKB-UniRule"/>
</dbReference>
<dbReference type="CDD" id="cd00770">
    <property type="entry name" value="SerRS_core"/>
    <property type="match status" value="1"/>
</dbReference>
<dbReference type="Gene3D" id="3.30.930.10">
    <property type="entry name" value="Bira Bifunctional Protein, Domain 2"/>
    <property type="match status" value="1"/>
</dbReference>
<dbReference type="Gene3D" id="1.10.287.40">
    <property type="entry name" value="Serine-tRNA synthetase, tRNA binding domain"/>
    <property type="match status" value="1"/>
</dbReference>
<dbReference type="HAMAP" id="MF_00176">
    <property type="entry name" value="Ser_tRNA_synth_type1"/>
    <property type="match status" value="1"/>
</dbReference>
<dbReference type="InterPro" id="IPR002314">
    <property type="entry name" value="aa-tRNA-synt_IIb"/>
</dbReference>
<dbReference type="InterPro" id="IPR006195">
    <property type="entry name" value="aa-tRNA-synth_II"/>
</dbReference>
<dbReference type="InterPro" id="IPR045864">
    <property type="entry name" value="aa-tRNA-synth_II/BPL/LPL"/>
</dbReference>
<dbReference type="InterPro" id="IPR002317">
    <property type="entry name" value="Ser-tRNA-ligase_type_1"/>
</dbReference>
<dbReference type="InterPro" id="IPR015866">
    <property type="entry name" value="Ser-tRNA-synth_1_N"/>
</dbReference>
<dbReference type="InterPro" id="IPR042103">
    <property type="entry name" value="SerRS_1_N_sf"/>
</dbReference>
<dbReference type="InterPro" id="IPR033729">
    <property type="entry name" value="SerRS_core"/>
</dbReference>
<dbReference type="InterPro" id="IPR010978">
    <property type="entry name" value="tRNA-bd_arm"/>
</dbReference>
<dbReference type="NCBIfam" id="TIGR00414">
    <property type="entry name" value="serS"/>
    <property type="match status" value="1"/>
</dbReference>
<dbReference type="PANTHER" id="PTHR43697:SF1">
    <property type="entry name" value="SERINE--TRNA LIGASE"/>
    <property type="match status" value="1"/>
</dbReference>
<dbReference type="PANTHER" id="PTHR43697">
    <property type="entry name" value="SERYL-TRNA SYNTHETASE"/>
    <property type="match status" value="1"/>
</dbReference>
<dbReference type="Pfam" id="PF02403">
    <property type="entry name" value="Seryl_tRNA_N"/>
    <property type="match status" value="1"/>
</dbReference>
<dbReference type="Pfam" id="PF00587">
    <property type="entry name" value="tRNA-synt_2b"/>
    <property type="match status" value="1"/>
</dbReference>
<dbReference type="PIRSF" id="PIRSF001529">
    <property type="entry name" value="Ser-tRNA-synth_IIa"/>
    <property type="match status" value="1"/>
</dbReference>
<dbReference type="PRINTS" id="PR00981">
    <property type="entry name" value="TRNASYNTHSER"/>
</dbReference>
<dbReference type="SUPFAM" id="SSF55681">
    <property type="entry name" value="Class II aaRS and biotin synthetases"/>
    <property type="match status" value="1"/>
</dbReference>
<dbReference type="SUPFAM" id="SSF46589">
    <property type="entry name" value="tRNA-binding arm"/>
    <property type="match status" value="1"/>
</dbReference>
<dbReference type="PROSITE" id="PS50862">
    <property type="entry name" value="AA_TRNA_LIGASE_II"/>
    <property type="match status" value="1"/>
</dbReference>
<evidence type="ECO:0000255" key="1">
    <source>
        <dbReference type="HAMAP-Rule" id="MF_00176"/>
    </source>
</evidence>
<sequence length="425" mass="48531">MLSIKWIRENQELFDEKLSKRFIEPMSSKIAMLDGEKRKITSLIQEFQHARKVKSKILGNMASKSGEEFEAIQRDVKHINEKLEELEQDLNNNNELNELLNMLPNIPDEEVPYGMDESMNKLVRTYGETNPNALNKQHFELGTKLNLMDFEQTAKISGARFVTLKGDLAKLERALINFMIDVHTKEFNFFEMSPPVLVRDNAMYNSGQLPKFAEESFATTNGYRLIPTAEVFLVNIVADTIIPREKLPMRYVAYTPCFRSEAGSSGRDTRGMIRLHQFGKVELVSITTPEESKHEHEYITNSSETILQKLNLPYRVMLLCTGDMGFAAKKTYDIEVWLPGQKQYREIASCSNCGDFQARRMKARYKEFGSNETTLVHTLNASGLPIGRTMVAILENYQNEDGSITIPDVLINYMGGLQKITTHGE</sequence>
<feature type="chain" id="PRO_1000019798" description="Serine--tRNA ligase">
    <location>
        <begin position="1"/>
        <end position="425"/>
    </location>
</feature>
<feature type="binding site" evidence="1">
    <location>
        <begin position="228"/>
        <end position="230"/>
    </location>
    <ligand>
        <name>L-serine</name>
        <dbReference type="ChEBI" id="CHEBI:33384"/>
    </ligand>
</feature>
<feature type="binding site" evidence="1">
    <location>
        <begin position="259"/>
        <end position="261"/>
    </location>
    <ligand>
        <name>ATP</name>
        <dbReference type="ChEBI" id="CHEBI:30616"/>
    </ligand>
</feature>
<feature type="binding site" evidence="1">
    <location>
        <position position="282"/>
    </location>
    <ligand>
        <name>L-serine</name>
        <dbReference type="ChEBI" id="CHEBI:33384"/>
    </ligand>
</feature>
<feature type="binding site" evidence="1">
    <location>
        <begin position="346"/>
        <end position="349"/>
    </location>
    <ligand>
        <name>ATP</name>
        <dbReference type="ChEBI" id="CHEBI:30616"/>
    </ligand>
</feature>
<feature type="binding site" evidence="1">
    <location>
        <position position="382"/>
    </location>
    <ligand>
        <name>L-serine</name>
        <dbReference type="ChEBI" id="CHEBI:33384"/>
    </ligand>
</feature>
<comment type="function">
    <text evidence="1">Catalyzes the attachment of serine to tRNA(Ser). Is also able to aminoacylate tRNA(Sec) with serine, to form the misacylated tRNA L-seryl-tRNA(Sec), which will be further converted into selenocysteinyl-tRNA(Sec).</text>
</comment>
<comment type="catalytic activity">
    <reaction evidence="1">
        <text>tRNA(Ser) + L-serine + ATP = L-seryl-tRNA(Ser) + AMP + diphosphate + H(+)</text>
        <dbReference type="Rhea" id="RHEA:12292"/>
        <dbReference type="Rhea" id="RHEA-COMP:9669"/>
        <dbReference type="Rhea" id="RHEA-COMP:9703"/>
        <dbReference type="ChEBI" id="CHEBI:15378"/>
        <dbReference type="ChEBI" id="CHEBI:30616"/>
        <dbReference type="ChEBI" id="CHEBI:33019"/>
        <dbReference type="ChEBI" id="CHEBI:33384"/>
        <dbReference type="ChEBI" id="CHEBI:78442"/>
        <dbReference type="ChEBI" id="CHEBI:78533"/>
        <dbReference type="ChEBI" id="CHEBI:456215"/>
        <dbReference type="EC" id="6.1.1.11"/>
    </reaction>
</comment>
<comment type="catalytic activity">
    <reaction evidence="1">
        <text>tRNA(Sec) + L-serine + ATP = L-seryl-tRNA(Sec) + AMP + diphosphate + H(+)</text>
        <dbReference type="Rhea" id="RHEA:42580"/>
        <dbReference type="Rhea" id="RHEA-COMP:9742"/>
        <dbReference type="Rhea" id="RHEA-COMP:10128"/>
        <dbReference type="ChEBI" id="CHEBI:15378"/>
        <dbReference type="ChEBI" id="CHEBI:30616"/>
        <dbReference type="ChEBI" id="CHEBI:33019"/>
        <dbReference type="ChEBI" id="CHEBI:33384"/>
        <dbReference type="ChEBI" id="CHEBI:78442"/>
        <dbReference type="ChEBI" id="CHEBI:78533"/>
        <dbReference type="ChEBI" id="CHEBI:456215"/>
        <dbReference type="EC" id="6.1.1.11"/>
    </reaction>
</comment>
<comment type="pathway">
    <text evidence="1">Aminoacyl-tRNA biosynthesis; selenocysteinyl-tRNA(Sec) biosynthesis; L-seryl-tRNA(Sec) from L-serine and tRNA(Sec): step 1/1.</text>
</comment>
<comment type="subunit">
    <text evidence="1">Homodimer. The tRNA molecule binds across the dimer.</text>
</comment>
<comment type="subcellular location">
    <subcellularLocation>
        <location evidence="1">Cytoplasm</location>
    </subcellularLocation>
</comment>
<comment type="domain">
    <text evidence="1">Consists of two distinct domains, a catalytic core and a N-terminal extension that is involved in tRNA binding.</text>
</comment>
<comment type="similarity">
    <text evidence="1">Belongs to the class-II aminoacyl-tRNA synthetase family. Type-1 seryl-tRNA synthetase subfamily.</text>
</comment>
<accession>A8GPX3</accession>
<keyword id="KW-0030">Aminoacyl-tRNA synthetase</keyword>
<keyword id="KW-0067">ATP-binding</keyword>
<keyword id="KW-0963">Cytoplasm</keyword>
<keyword id="KW-0436">Ligase</keyword>
<keyword id="KW-0547">Nucleotide-binding</keyword>
<keyword id="KW-0648">Protein biosynthesis</keyword>
<gene>
    <name evidence="1" type="primary">serS</name>
    <name type="ordered locus">A1C_06075</name>
</gene>
<proteinExistence type="inferred from homology"/>
<organism>
    <name type="scientific">Rickettsia akari (strain Hartford)</name>
    <dbReference type="NCBI Taxonomy" id="293614"/>
    <lineage>
        <taxon>Bacteria</taxon>
        <taxon>Pseudomonadati</taxon>
        <taxon>Pseudomonadota</taxon>
        <taxon>Alphaproteobacteria</taxon>
        <taxon>Rickettsiales</taxon>
        <taxon>Rickettsiaceae</taxon>
        <taxon>Rickettsieae</taxon>
        <taxon>Rickettsia</taxon>
        <taxon>spotted fever group</taxon>
    </lineage>
</organism>